<protein>
    <recommendedName>
        <fullName evidence="1">D-amino acid dehydrogenase</fullName>
        <ecNumber evidence="1">1.4.99.-</ecNumber>
    </recommendedName>
</protein>
<proteinExistence type="inferred from homology"/>
<name>DADA_BURM7</name>
<keyword id="KW-0274">FAD</keyword>
<keyword id="KW-0285">Flavoprotein</keyword>
<keyword id="KW-0560">Oxidoreductase</keyword>
<feature type="chain" id="PRO_1000066075" description="D-amino acid dehydrogenase">
    <location>
        <begin position="1"/>
        <end position="428"/>
    </location>
</feature>
<feature type="binding site" evidence="1">
    <location>
        <begin position="3"/>
        <end position="17"/>
    </location>
    <ligand>
        <name>FAD</name>
        <dbReference type="ChEBI" id="CHEBI:57692"/>
    </ligand>
</feature>
<organism>
    <name type="scientific">Burkholderia mallei (strain NCTC 10247)</name>
    <dbReference type="NCBI Taxonomy" id="320389"/>
    <lineage>
        <taxon>Bacteria</taxon>
        <taxon>Pseudomonadati</taxon>
        <taxon>Pseudomonadota</taxon>
        <taxon>Betaproteobacteria</taxon>
        <taxon>Burkholderiales</taxon>
        <taxon>Burkholderiaceae</taxon>
        <taxon>Burkholderia</taxon>
        <taxon>pseudomallei group</taxon>
    </lineage>
</organism>
<dbReference type="EC" id="1.4.99.-" evidence="1"/>
<dbReference type="EMBL" id="CP000548">
    <property type="protein sequence ID" value="ABO05709.1"/>
    <property type="molecule type" value="Genomic_DNA"/>
</dbReference>
<dbReference type="RefSeq" id="WP_004189387.1">
    <property type="nucleotide sequence ID" value="NZ_CP007802.1"/>
</dbReference>
<dbReference type="SMR" id="A3MHR1"/>
<dbReference type="KEGG" id="bmaz:BM44_2770"/>
<dbReference type="KEGG" id="bmn:BMA10247_0222"/>
<dbReference type="PATRIC" id="fig|320389.8.peg.3128"/>
<dbReference type="UniPathway" id="UPA00043">
    <property type="reaction ID" value="UER00498"/>
</dbReference>
<dbReference type="GO" id="GO:0005737">
    <property type="term" value="C:cytoplasm"/>
    <property type="evidence" value="ECO:0007669"/>
    <property type="project" value="TreeGrafter"/>
</dbReference>
<dbReference type="GO" id="GO:0005886">
    <property type="term" value="C:plasma membrane"/>
    <property type="evidence" value="ECO:0007669"/>
    <property type="project" value="TreeGrafter"/>
</dbReference>
<dbReference type="GO" id="GO:0008718">
    <property type="term" value="F:D-amino-acid dehydrogenase activity"/>
    <property type="evidence" value="ECO:0007669"/>
    <property type="project" value="UniProtKB-UniRule"/>
</dbReference>
<dbReference type="GO" id="GO:0055130">
    <property type="term" value="P:D-alanine catabolic process"/>
    <property type="evidence" value="ECO:0007669"/>
    <property type="project" value="UniProtKB-UniPathway"/>
</dbReference>
<dbReference type="FunFam" id="3.50.50.60:FF:000020">
    <property type="entry name" value="D-amino acid dehydrogenase"/>
    <property type="match status" value="1"/>
</dbReference>
<dbReference type="Gene3D" id="3.30.9.10">
    <property type="entry name" value="D-Amino Acid Oxidase, subunit A, domain 2"/>
    <property type="match status" value="1"/>
</dbReference>
<dbReference type="Gene3D" id="3.50.50.60">
    <property type="entry name" value="FAD/NAD(P)-binding domain"/>
    <property type="match status" value="2"/>
</dbReference>
<dbReference type="HAMAP" id="MF_01202">
    <property type="entry name" value="DadA"/>
    <property type="match status" value="1"/>
</dbReference>
<dbReference type="InterPro" id="IPR023080">
    <property type="entry name" value="DadA"/>
</dbReference>
<dbReference type="InterPro" id="IPR006076">
    <property type="entry name" value="FAD-dep_OxRdtase"/>
</dbReference>
<dbReference type="InterPro" id="IPR036188">
    <property type="entry name" value="FAD/NAD-bd_sf"/>
</dbReference>
<dbReference type="NCBIfam" id="NF001933">
    <property type="entry name" value="PRK00711.1"/>
    <property type="match status" value="1"/>
</dbReference>
<dbReference type="PANTHER" id="PTHR13847:SF280">
    <property type="entry name" value="D-AMINO ACID DEHYDROGENASE"/>
    <property type="match status" value="1"/>
</dbReference>
<dbReference type="PANTHER" id="PTHR13847">
    <property type="entry name" value="SARCOSINE DEHYDROGENASE-RELATED"/>
    <property type="match status" value="1"/>
</dbReference>
<dbReference type="Pfam" id="PF01266">
    <property type="entry name" value="DAO"/>
    <property type="match status" value="1"/>
</dbReference>
<dbReference type="SUPFAM" id="SSF54373">
    <property type="entry name" value="FAD-linked reductases, C-terminal domain"/>
    <property type="match status" value="1"/>
</dbReference>
<dbReference type="SUPFAM" id="SSF51905">
    <property type="entry name" value="FAD/NAD(P)-binding domain"/>
    <property type="match status" value="1"/>
</dbReference>
<reference key="1">
    <citation type="journal article" date="2010" name="Genome Biol. Evol.">
        <title>Continuing evolution of Burkholderia mallei through genome reduction and large-scale rearrangements.</title>
        <authorList>
            <person name="Losada L."/>
            <person name="Ronning C.M."/>
            <person name="DeShazer D."/>
            <person name="Woods D."/>
            <person name="Fedorova N."/>
            <person name="Kim H.S."/>
            <person name="Shabalina S.A."/>
            <person name="Pearson T.R."/>
            <person name="Brinkac L."/>
            <person name="Tan P."/>
            <person name="Nandi T."/>
            <person name="Crabtree J."/>
            <person name="Badger J."/>
            <person name="Beckstrom-Sternberg S."/>
            <person name="Saqib M."/>
            <person name="Schutzer S.E."/>
            <person name="Keim P."/>
            <person name="Nierman W.C."/>
        </authorList>
    </citation>
    <scope>NUCLEOTIDE SEQUENCE [LARGE SCALE GENOMIC DNA]</scope>
    <source>
        <strain>NCTC 10247</strain>
    </source>
</reference>
<sequence>MRVVILGSGVVGVASAYYLARAGHEVTVIDREAGPALDTSFANAGQISPGYAAPWAAPGVPLKAVKWMFEKHAPLAIRLDGTRFQLQWMWQMLRNCTTERYALNKGRMVRLAEYSRDCLQALRAETAIQYEGRTGGTLQVFRTQQQLDGAAKDIAVLREANVPFELLSSDELKKAEPALAAVSHKLTGGLRLPGDETGDCQLFTTRLAALAEQLGVKFRFNTRIDALAVAGGKIAGVQCGGEMVRADAYVVALGSYSTNLVASLVKIPVYPLKGYSITAPIVDAAKAPVSTVLDETYKIAITRFDDRIRVGGMAEIVGFDKRLRDARRGTLEMCVNDLFPGGGDTAKATFWTGLRPMTPDGTPIVGRTPVPNLFLNTGHGTLGWTMSCGSGQLLADLMSGKKPAIRADDLSVHRYLSETDGEHRPAYA</sequence>
<evidence type="ECO:0000255" key="1">
    <source>
        <dbReference type="HAMAP-Rule" id="MF_01202"/>
    </source>
</evidence>
<gene>
    <name evidence="1" type="primary">dadA</name>
    <name type="ordered locus">BMA10247_0222</name>
</gene>
<comment type="function">
    <text evidence="1">Oxidative deamination of D-amino acids.</text>
</comment>
<comment type="catalytic activity">
    <reaction evidence="1">
        <text>a D-alpha-amino acid + A + H2O = a 2-oxocarboxylate + AH2 + NH4(+)</text>
        <dbReference type="Rhea" id="RHEA:18125"/>
        <dbReference type="ChEBI" id="CHEBI:13193"/>
        <dbReference type="ChEBI" id="CHEBI:15377"/>
        <dbReference type="ChEBI" id="CHEBI:17499"/>
        <dbReference type="ChEBI" id="CHEBI:28938"/>
        <dbReference type="ChEBI" id="CHEBI:35179"/>
        <dbReference type="ChEBI" id="CHEBI:59871"/>
    </reaction>
</comment>
<comment type="cofactor">
    <cofactor evidence="1">
        <name>FAD</name>
        <dbReference type="ChEBI" id="CHEBI:57692"/>
    </cofactor>
</comment>
<comment type="pathway">
    <text>Amino-acid degradation; D-alanine degradation; NH(3) and pyruvate from D-alanine: step 1/1.</text>
</comment>
<comment type="similarity">
    <text evidence="1">Belongs to the DadA oxidoreductase family.</text>
</comment>
<accession>A3MHR1</accession>